<reference key="1">
    <citation type="journal article" date="2007" name="J. Bacteriol.">
        <title>Genome sequence and analysis of the soil cellulolytic actinomycete Thermobifida fusca YX.</title>
        <authorList>
            <person name="Lykidis A."/>
            <person name="Mavromatis K."/>
            <person name="Ivanova N."/>
            <person name="Anderson I."/>
            <person name="Land M."/>
            <person name="DiBartolo G."/>
            <person name="Martinez M."/>
            <person name="Lapidus A."/>
            <person name="Lucas S."/>
            <person name="Copeland A."/>
            <person name="Richardson P."/>
            <person name="Wilson D.B."/>
            <person name="Kyrpides N."/>
        </authorList>
    </citation>
    <scope>NUCLEOTIDE SEQUENCE [LARGE SCALE GENOMIC DNA]</scope>
    <source>
        <strain>YX</strain>
    </source>
</reference>
<protein>
    <recommendedName>
        <fullName evidence="1">Pup--protein ligase</fullName>
        <ecNumber evidence="1">6.3.1.19</ecNumber>
    </recommendedName>
    <alternativeName>
        <fullName evidence="1">Proteasome accessory factor A</fullName>
    </alternativeName>
    <alternativeName>
        <fullName evidence="1">Pup-conjugating enzyme</fullName>
    </alternativeName>
</protein>
<comment type="function">
    <text evidence="1">Catalyzes the covalent attachment of the prokaryotic ubiquitin-like protein modifier Pup to the proteasomal substrate proteins, thereby targeting them for proteasomal degradation. This tagging system is termed pupylation. The ligation reaction involves the side-chain carboxylate of the C-terminal glutamate of Pup and the side-chain amino group of a substrate lysine.</text>
</comment>
<comment type="catalytic activity">
    <reaction evidence="1">
        <text>ATP + [prokaryotic ubiquitin-like protein]-L-glutamate + [protein]-L-lysine = ADP + phosphate + N(6)-([prokaryotic ubiquitin-like protein]-gamma-L-glutamyl)-[protein]-L-lysine.</text>
        <dbReference type="EC" id="6.3.1.19"/>
    </reaction>
</comment>
<comment type="pathway">
    <text evidence="1">Protein degradation; proteasomal Pup-dependent pathway.</text>
</comment>
<comment type="pathway">
    <text evidence="1">Protein modification; protein pupylation.</text>
</comment>
<comment type="miscellaneous">
    <text evidence="1">The reaction mechanism probably proceeds via the activation of Pup by phosphorylation of its C-terminal glutamate, which is then subject to nucleophilic attack by the substrate lysine, resulting in an isopeptide bond and the release of phosphate as a good leaving group.</text>
</comment>
<comment type="similarity">
    <text evidence="1">Belongs to the Pup ligase/Pup deamidase family. Pup-conjugating enzyme subfamily.</text>
</comment>
<accession>Q47NZ6</accession>
<sequence>MERRIFGLENEYGVTCTFRGQRRLSPDEVARYLFRRVVSWGRSSNVFLRNGARLYLDVGSHPEYATPECDNLLDLVAHDKAGERILEGLQIDAEQRLREEGIAGDIYLFKNNTDSAGNSYGCHENYLVARHGEFGKLADVLIPFLVTRQIICGAGKVLQTPRGALYCVSQRAEHIWEGVSSATTRSRPIINTRDEPHADAERFRRLHVIVGDSNMSETTTLLKLASTDLVLRMIEANVPMRDFTLENPIRAIREISHDMTGRRKVRLANGREASALEIQREYLERVQSFVDRTGTDATGKRVLELWQRTLEAVESGNLDLVAREIDWVAKYKLLERYRAKHGLSLSSPRVAQLDLTYHDIHRDRGLFYLLQQRGQMERVVSDLRIFEAKSVPPQTTRARLRGEFIKKAQEKRRDFTVDWVHLKLNDQAQRTVLCKDPFKAVDERVEKLIAGM</sequence>
<feature type="chain" id="PRO_0000395960" description="Pup--protein ligase">
    <location>
        <begin position="1"/>
        <end position="452"/>
    </location>
</feature>
<feature type="active site" description="Proton acceptor" evidence="1">
    <location>
        <position position="57"/>
    </location>
</feature>
<feature type="binding site" evidence="1">
    <location>
        <position position="9"/>
    </location>
    <ligand>
        <name>Mg(2+)</name>
        <dbReference type="ChEBI" id="CHEBI:18420"/>
    </ligand>
</feature>
<feature type="binding site" evidence="1">
    <location>
        <position position="53"/>
    </location>
    <ligand>
        <name>ATP</name>
        <dbReference type="ChEBI" id="CHEBI:30616"/>
    </ligand>
</feature>
<feature type="binding site" evidence="1">
    <location>
        <position position="55"/>
    </location>
    <ligand>
        <name>Mg(2+)</name>
        <dbReference type="ChEBI" id="CHEBI:18420"/>
    </ligand>
</feature>
<feature type="binding site" evidence="1">
    <location>
        <position position="63"/>
    </location>
    <ligand>
        <name>Mg(2+)</name>
        <dbReference type="ChEBI" id="CHEBI:18420"/>
    </ligand>
</feature>
<feature type="binding site" evidence="1">
    <location>
        <position position="66"/>
    </location>
    <ligand>
        <name>ATP</name>
        <dbReference type="ChEBI" id="CHEBI:30616"/>
    </ligand>
</feature>
<feature type="binding site" evidence="1">
    <location>
        <position position="419"/>
    </location>
    <ligand>
        <name>ATP</name>
        <dbReference type="ChEBI" id="CHEBI:30616"/>
    </ligand>
</feature>
<organism>
    <name type="scientific">Thermobifida fusca (strain YX)</name>
    <dbReference type="NCBI Taxonomy" id="269800"/>
    <lineage>
        <taxon>Bacteria</taxon>
        <taxon>Bacillati</taxon>
        <taxon>Actinomycetota</taxon>
        <taxon>Actinomycetes</taxon>
        <taxon>Streptosporangiales</taxon>
        <taxon>Nocardiopsidaceae</taxon>
        <taxon>Thermobifida</taxon>
    </lineage>
</organism>
<name>PAFA_THEFY</name>
<gene>
    <name evidence="1" type="primary">pafA</name>
    <name type="ordered locus">Tfu_1788</name>
</gene>
<keyword id="KW-0067">ATP-binding</keyword>
<keyword id="KW-0436">Ligase</keyword>
<keyword id="KW-0460">Magnesium</keyword>
<keyword id="KW-0479">Metal-binding</keyword>
<keyword id="KW-0547">Nucleotide-binding</keyword>
<keyword id="KW-0833">Ubl conjugation pathway</keyword>
<dbReference type="EC" id="6.3.1.19" evidence="1"/>
<dbReference type="EMBL" id="CP000088">
    <property type="protein sequence ID" value="AAZ55823.1"/>
    <property type="molecule type" value="Genomic_DNA"/>
</dbReference>
<dbReference type="RefSeq" id="WP_011292214.1">
    <property type="nucleotide sequence ID" value="NC_007333.1"/>
</dbReference>
<dbReference type="SMR" id="Q47NZ6"/>
<dbReference type="STRING" id="269800.Tfu_1788"/>
<dbReference type="KEGG" id="tfu:Tfu_1788"/>
<dbReference type="eggNOG" id="COG0638">
    <property type="taxonomic scope" value="Bacteria"/>
</dbReference>
<dbReference type="HOGENOM" id="CLU_040524_0_1_11"/>
<dbReference type="OrthoDB" id="9760627at2"/>
<dbReference type="BRENDA" id="6.3.1.19">
    <property type="organism ID" value="6298"/>
</dbReference>
<dbReference type="UniPathway" id="UPA00997"/>
<dbReference type="UniPathway" id="UPA00998"/>
<dbReference type="GO" id="GO:0005524">
    <property type="term" value="F:ATP binding"/>
    <property type="evidence" value="ECO:0007669"/>
    <property type="project" value="UniProtKB-UniRule"/>
</dbReference>
<dbReference type="GO" id="GO:0016879">
    <property type="term" value="F:ligase activity, forming carbon-nitrogen bonds"/>
    <property type="evidence" value="ECO:0007669"/>
    <property type="project" value="InterPro"/>
</dbReference>
<dbReference type="GO" id="GO:0000287">
    <property type="term" value="F:magnesium ion binding"/>
    <property type="evidence" value="ECO:0007669"/>
    <property type="project" value="UniProtKB-UniRule"/>
</dbReference>
<dbReference type="GO" id="GO:0019787">
    <property type="term" value="F:ubiquitin-like protein transferase activity"/>
    <property type="evidence" value="ECO:0007669"/>
    <property type="project" value="UniProtKB-UniRule"/>
</dbReference>
<dbReference type="GO" id="GO:0019941">
    <property type="term" value="P:modification-dependent protein catabolic process"/>
    <property type="evidence" value="ECO:0007669"/>
    <property type="project" value="UniProtKB-UniRule"/>
</dbReference>
<dbReference type="GO" id="GO:0010498">
    <property type="term" value="P:proteasomal protein catabolic process"/>
    <property type="evidence" value="ECO:0007669"/>
    <property type="project" value="UniProtKB-UniRule"/>
</dbReference>
<dbReference type="GO" id="GO:0070490">
    <property type="term" value="P:protein pupylation"/>
    <property type="evidence" value="ECO:0007669"/>
    <property type="project" value="UniProtKB-UniRule"/>
</dbReference>
<dbReference type="HAMAP" id="MF_02111">
    <property type="entry name" value="Pup_ligase"/>
    <property type="match status" value="1"/>
</dbReference>
<dbReference type="InterPro" id="IPR022279">
    <property type="entry name" value="Pup_ligase"/>
</dbReference>
<dbReference type="InterPro" id="IPR004347">
    <property type="entry name" value="Pup_ligase/deamidase"/>
</dbReference>
<dbReference type="NCBIfam" id="TIGR03686">
    <property type="entry name" value="pupylate_PafA"/>
    <property type="match status" value="1"/>
</dbReference>
<dbReference type="PANTHER" id="PTHR42307">
    <property type="entry name" value="PUP DEAMIDASE/DEPUPYLASE"/>
    <property type="match status" value="1"/>
</dbReference>
<dbReference type="PANTHER" id="PTHR42307:SF3">
    <property type="entry name" value="PUP--PROTEIN LIGASE"/>
    <property type="match status" value="1"/>
</dbReference>
<dbReference type="Pfam" id="PF03136">
    <property type="entry name" value="Pup_ligase"/>
    <property type="match status" value="1"/>
</dbReference>
<dbReference type="PIRSF" id="PIRSF018077">
    <property type="entry name" value="UCP018077"/>
    <property type="match status" value="1"/>
</dbReference>
<evidence type="ECO:0000255" key="1">
    <source>
        <dbReference type="HAMAP-Rule" id="MF_02111"/>
    </source>
</evidence>
<proteinExistence type="inferred from homology"/>